<dbReference type="EC" id="2.5.1.7" evidence="1"/>
<dbReference type="EMBL" id="CP000001">
    <property type="protein sequence ID" value="AAU15293.1"/>
    <property type="molecule type" value="Genomic_DNA"/>
</dbReference>
<dbReference type="RefSeq" id="WP_000411264.1">
    <property type="nucleotide sequence ID" value="NZ_CP009968.1"/>
</dbReference>
<dbReference type="SMR" id="Q630W1"/>
<dbReference type="GeneID" id="93005836"/>
<dbReference type="KEGG" id="bcz:BCE33L4987"/>
<dbReference type="PATRIC" id="fig|288681.22.peg.359"/>
<dbReference type="UniPathway" id="UPA00219"/>
<dbReference type="Proteomes" id="UP000002612">
    <property type="component" value="Chromosome"/>
</dbReference>
<dbReference type="GO" id="GO:0005737">
    <property type="term" value="C:cytoplasm"/>
    <property type="evidence" value="ECO:0007669"/>
    <property type="project" value="UniProtKB-SubCell"/>
</dbReference>
<dbReference type="GO" id="GO:0008760">
    <property type="term" value="F:UDP-N-acetylglucosamine 1-carboxyvinyltransferase activity"/>
    <property type="evidence" value="ECO:0007669"/>
    <property type="project" value="UniProtKB-UniRule"/>
</dbReference>
<dbReference type="GO" id="GO:0051301">
    <property type="term" value="P:cell division"/>
    <property type="evidence" value="ECO:0007669"/>
    <property type="project" value="UniProtKB-KW"/>
</dbReference>
<dbReference type="GO" id="GO:0071555">
    <property type="term" value="P:cell wall organization"/>
    <property type="evidence" value="ECO:0007669"/>
    <property type="project" value="UniProtKB-KW"/>
</dbReference>
<dbReference type="GO" id="GO:0009252">
    <property type="term" value="P:peptidoglycan biosynthetic process"/>
    <property type="evidence" value="ECO:0007669"/>
    <property type="project" value="UniProtKB-UniRule"/>
</dbReference>
<dbReference type="GO" id="GO:0008360">
    <property type="term" value="P:regulation of cell shape"/>
    <property type="evidence" value="ECO:0007669"/>
    <property type="project" value="UniProtKB-KW"/>
</dbReference>
<dbReference type="GO" id="GO:0019277">
    <property type="term" value="P:UDP-N-acetylgalactosamine biosynthetic process"/>
    <property type="evidence" value="ECO:0007669"/>
    <property type="project" value="InterPro"/>
</dbReference>
<dbReference type="CDD" id="cd01555">
    <property type="entry name" value="UdpNAET"/>
    <property type="match status" value="1"/>
</dbReference>
<dbReference type="FunFam" id="3.65.10.10:FF:000001">
    <property type="entry name" value="UDP-N-acetylglucosamine 1-carboxyvinyltransferase"/>
    <property type="match status" value="1"/>
</dbReference>
<dbReference type="Gene3D" id="3.65.10.10">
    <property type="entry name" value="Enolpyruvate transferase domain"/>
    <property type="match status" value="2"/>
</dbReference>
<dbReference type="HAMAP" id="MF_00111">
    <property type="entry name" value="MurA"/>
    <property type="match status" value="1"/>
</dbReference>
<dbReference type="InterPro" id="IPR001986">
    <property type="entry name" value="Enolpyruvate_Tfrase_dom"/>
</dbReference>
<dbReference type="InterPro" id="IPR036968">
    <property type="entry name" value="Enolpyruvate_Tfrase_sf"/>
</dbReference>
<dbReference type="InterPro" id="IPR050068">
    <property type="entry name" value="MurA_subfamily"/>
</dbReference>
<dbReference type="InterPro" id="IPR013792">
    <property type="entry name" value="RNA3'P_cycl/enolpyr_Trfase_a/b"/>
</dbReference>
<dbReference type="InterPro" id="IPR005750">
    <property type="entry name" value="UDP_GlcNAc_COvinyl_MurA"/>
</dbReference>
<dbReference type="NCBIfam" id="TIGR01072">
    <property type="entry name" value="murA"/>
    <property type="match status" value="1"/>
</dbReference>
<dbReference type="NCBIfam" id="NF006873">
    <property type="entry name" value="PRK09369.1"/>
    <property type="match status" value="1"/>
</dbReference>
<dbReference type="NCBIfam" id="NF009470">
    <property type="entry name" value="PRK12830.1"/>
    <property type="match status" value="1"/>
</dbReference>
<dbReference type="PANTHER" id="PTHR43783">
    <property type="entry name" value="UDP-N-ACETYLGLUCOSAMINE 1-CARBOXYVINYLTRANSFERASE"/>
    <property type="match status" value="1"/>
</dbReference>
<dbReference type="PANTHER" id="PTHR43783:SF1">
    <property type="entry name" value="UDP-N-ACETYLGLUCOSAMINE 1-CARBOXYVINYLTRANSFERASE"/>
    <property type="match status" value="1"/>
</dbReference>
<dbReference type="Pfam" id="PF00275">
    <property type="entry name" value="EPSP_synthase"/>
    <property type="match status" value="1"/>
</dbReference>
<dbReference type="SUPFAM" id="SSF55205">
    <property type="entry name" value="EPT/RTPC-like"/>
    <property type="match status" value="1"/>
</dbReference>
<keyword id="KW-0131">Cell cycle</keyword>
<keyword id="KW-0132">Cell division</keyword>
<keyword id="KW-0133">Cell shape</keyword>
<keyword id="KW-0961">Cell wall biogenesis/degradation</keyword>
<keyword id="KW-0963">Cytoplasm</keyword>
<keyword id="KW-0573">Peptidoglycan synthesis</keyword>
<keyword id="KW-0670">Pyruvate</keyword>
<keyword id="KW-0808">Transferase</keyword>
<protein>
    <recommendedName>
        <fullName evidence="1">UDP-N-acetylglucosamine 1-carboxyvinyltransferase 1</fullName>
        <ecNumber evidence="1">2.5.1.7</ecNumber>
    </recommendedName>
    <alternativeName>
        <fullName evidence="1">Enoylpyruvate transferase 1</fullName>
    </alternativeName>
    <alternativeName>
        <fullName evidence="1">UDP-N-acetylglucosamine enolpyruvyl transferase 1</fullName>
        <shortName evidence="1">EPT 1</shortName>
    </alternativeName>
</protein>
<name>MURA1_BACCZ</name>
<comment type="function">
    <text evidence="1">Cell wall formation. Adds enolpyruvyl to UDP-N-acetylglucosamine.</text>
</comment>
<comment type="catalytic activity">
    <reaction evidence="1">
        <text>phosphoenolpyruvate + UDP-N-acetyl-alpha-D-glucosamine = UDP-N-acetyl-3-O-(1-carboxyvinyl)-alpha-D-glucosamine + phosphate</text>
        <dbReference type="Rhea" id="RHEA:18681"/>
        <dbReference type="ChEBI" id="CHEBI:43474"/>
        <dbReference type="ChEBI" id="CHEBI:57705"/>
        <dbReference type="ChEBI" id="CHEBI:58702"/>
        <dbReference type="ChEBI" id="CHEBI:68483"/>
        <dbReference type="EC" id="2.5.1.7"/>
    </reaction>
</comment>
<comment type="pathway">
    <text evidence="1">Cell wall biogenesis; peptidoglycan biosynthesis.</text>
</comment>
<comment type="subcellular location">
    <subcellularLocation>
        <location evidence="1">Cytoplasm</location>
    </subcellularLocation>
</comment>
<comment type="similarity">
    <text evidence="1">Belongs to the EPSP synthase family. MurA subfamily.</text>
</comment>
<evidence type="ECO:0000255" key="1">
    <source>
        <dbReference type="HAMAP-Rule" id="MF_00111"/>
    </source>
</evidence>
<sequence>MEKIIVRGGKRLNGTVRVEGAKNAVLPIIAAALLASDGKNVLSEVPVLSDVYTINEVLRHLNAEVVFENNQVTIDASKELNIEAPFEYVRKMRASVQVMGPLLARNGRARIALPGGCAIGSRPIDQHLKGFEAMGAKVQVGNGFVEAYVEGELKGAKIYLDFPSVGATENIMSAATLAKGTTILENAAKEPEIVDLANFLNAMGAKVRGAGTGTIRIEGVDKLYGANHSIIPDRIEAGTFMVAAAITGGDILIENAVPEHLRSITAKMEEMGVKIIEENEGVRVIGPDKLKAVDIKTMPHPGFPTDMQSQMMALLLQADGTSMITETVFENRFMHVEEFRRMNADIKIEGRSVIMNGPNSLQGAEVGATDLRAAAALILAGLVSEGYTRVTELKHLDRGYVDFHKKLAALGATIERVNEKVEEVKEQEVSDLHA</sequence>
<reference key="1">
    <citation type="journal article" date="2006" name="J. Bacteriol.">
        <title>Pathogenomic sequence analysis of Bacillus cereus and Bacillus thuringiensis isolates closely related to Bacillus anthracis.</title>
        <authorList>
            <person name="Han C.S."/>
            <person name="Xie G."/>
            <person name="Challacombe J.F."/>
            <person name="Altherr M.R."/>
            <person name="Bhotika S.S."/>
            <person name="Bruce D."/>
            <person name="Campbell C.S."/>
            <person name="Campbell M.L."/>
            <person name="Chen J."/>
            <person name="Chertkov O."/>
            <person name="Cleland C."/>
            <person name="Dimitrijevic M."/>
            <person name="Doggett N.A."/>
            <person name="Fawcett J.J."/>
            <person name="Glavina T."/>
            <person name="Goodwin L.A."/>
            <person name="Hill K.K."/>
            <person name="Hitchcock P."/>
            <person name="Jackson P.J."/>
            <person name="Keim P."/>
            <person name="Kewalramani A.R."/>
            <person name="Longmire J."/>
            <person name="Lucas S."/>
            <person name="Malfatti S."/>
            <person name="McMurry K."/>
            <person name="Meincke L.J."/>
            <person name="Misra M."/>
            <person name="Moseman B.L."/>
            <person name="Mundt M."/>
            <person name="Munk A.C."/>
            <person name="Okinaka R.T."/>
            <person name="Parson-Quintana B."/>
            <person name="Reilly L.P."/>
            <person name="Richardson P."/>
            <person name="Robinson D.L."/>
            <person name="Rubin E."/>
            <person name="Saunders E."/>
            <person name="Tapia R."/>
            <person name="Tesmer J.G."/>
            <person name="Thayer N."/>
            <person name="Thompson L.S."/>
            <person name="Tice H."/>
            <person name="Ticknor L.O."/>
            <person name="Wills P.L."/>
            <person name="Brettin T.S."/>
            <person name="Gilna P."/>
        </authorList>
    </citation>
    <scope>NUCLEOTIDE SEQUENCE [LARGE SCALE GENOMIC DNA]</scope>
    <source>
        <strain>ZK / E33L</strain>
    </source>
</reference>
<gene>
    <name evidence="1" type="primary">murA1</name>
    <name type="synonym">murA</name>
    <name type="ordered locus">BCE33L4987</name>
</gene>
<feature type="chain" id="PRO_0000231159" description="UDP-N-acetylglucosamine 1-carboxyvinyltransferase 1">
    <location>
        <begin position="1"/>
        <end position="434"/>
    </location>
</feature>
<feature type="active site" description="Proton donor" evidence="1">
    <location>
        <position position="117"/>
    </location>
</feature>
<feature type="binding site" evidence="1">
    <location>
        <begin position="22"/>
        <end position="23"/>
    </location>
    <ligand>
        <name>phosphoenolpyruvate</name>
        <dbReference type="ChEBI" id="CHEBI:58702"/>
    </ligand>
</feature>
<feature type="binding site" evidence="1">
    <location>
        <position position="93"/>
    </location>
    <ligand>
        <name>UDP-N-acetyl-alpha-D-glucosamine</name>
        <dbReference type="ChEBI" id="CHEBI:57705"/>
    </ligand>
</feature>
<feature type="binding site" evidence="1">
    <location>
        <begin position="122"/>
        <end position="126"/>
    </location>
    <ligand>
        <name>UDP-N-acetyl-alpha-D-glucosamine</name>
        <dbReference type="ChEBI" id="CHEBI:57705"/>
    </ligand>
</feature>
<feature type="binding site" evidence="1">
    <location>
        <position position="306"/>
    </location>
    <ligand>
        <name>UDP-N-acetyl-alpha-D-glucosamine</name>
        <dbReference type="ChEBI" id="CHEBI:57705"/>
    </ligand>
</feature>
<feature type="binding site" evidence="1">
    <location>
        <position position="328"/>
    </location>
    <ligand>
        <name>UDP-N-acetyl-alpha-D-glucosamine</name>
        <dbReference type="ChEBI" id="CHEBI:57705"/>
    </ligand>
</feature>
<feature type="modified residue" description="2-(S-cysteinyl)pyruvic acid O-phosphothioketal" evidence="1">
    <location>
        <position position="117"/>
    </location>
</feature>
<accession>Q630W1</accession>
<organism>
    <name type="scientific">Bacillus cereus (strain ZK / E33L)</name>
    <dbReference type="NCBI Taxonomy" id="288681"/>
    <lineage>
        <taxon>Bacteria</taxon>
        <taxon>Bacillati</taxon>
        <taxon>Bacillota</taxon>
        <taxon>Bacilli</taxon>
        <taxon>Bacillales</taxon>
        <taxon>Bacillaceae</taxon>
        <taxon>Bacillus</taxon>
        <taxon>Bacillus cereus group</taxon>
    </lineage>
</organism>
<proteinExistence type="inferred from homology"/>